<keyword id="KW-0031">Aminopeptidase</keyword>
<keyword id="KW-1015">Disulfide bond</keyword>
<keyword id="KW-0325">Glycoprotein</keyword>
<keyword id="KW-0378">Hydrolase</keyword>
<keyword id="KW-0479">Metal-binding</keyword>
<keyword id="KW-0645">Protease</keyword>
<keyword id="KW-0964">Secreted</keyword>
<keyword id="KW-0732">Signal</keyword>
<keyword id="KW-0862">Zinc</keyword>
<keyword id="KW-0865">Zymogen</keyword>
<reference key="1">
    <citation type="journal article" date="2015" name="PLoS Genet.">
        <title>The dynamic genome and transcriptome of the human fungal pathogen Blastomyces and close relative Emmonsia.</title>
        <authorList>
            <person name="Munoz J.F."/>
            <person name="Gauthier G.M."/>
            <person name="Desjardins C.A."/>
            <person name="Gallo J.E."/>
            <person name="Holder J."/>
            <person name="Sullivan T.D."/>
            <person name="Marty A.J."/>
            <person name="Carmen J.C."/>
            <person name="Chen Z."/>
            <person name="Ding L."/>
            <person name="Gujja S."/>
            <person name="Magrini V."/>
            <person name="Misas E."/>
            <person name="Mitreva M."/>
            <person name="Priest M."/>
            <person name="Saif S."/>
            <person name="Whiston E.A."/>
            <person name="Young S."/>
            <person name="Zeng Q."/>
            <person name="Goldman W.E."/>
            <person name="Mardis E.R."/>
            <person name="Taylor J.W."/>
            <person name="McEwen J.G."/>
            <person name="Clay O.K."/>
            <person name="Klein B.S."/>
            <person name="Cuomo C.A."/>
        </authorList>
    </citation>
    <scope>NUCLEOTIDE SEQUENCE [LARGE SCALE GENOMIC DNA]</scope>
    <source>
        <strain>ER-3 / ATCC MYA-2586</strain>
    </source>
</reference>
<feature type="signal peptide" evidence="2">
    <location>
        <begin position="1"/>
        <end position="19"/>
    </location>
</feature>
<feature type="propeptide" id="PRO_0000412382" evidence="1">
    <location>
        <begin position="20"/>
        <end position="87"/>
    </location>
</feature>
<feature type="chain" id="PRO_0000412383" description="Leucine aminopeptidase 1">
    <location>
        <begin position="88"/>
        <end position="385"/>
    </location>
</feature>
<feature type="binding site" evidence="1">
    <location>
        <position position="185"/>
    </location>
    <ligand>
        <name>Zn(2+)</name>
        <dbReference type="ChEBI" id="CHEBI:29105"/>
        <label>1</label>
    </ligand>
</feature>
<feature type="binding site" evidence="1">
    <location>
        <position position="204"/>
    </location>
    <ligand>
        <name>Zn(2+)</name>
        <dbReference type="ChEBI" id="CHEBI:29105"/>
        <label>1</label>
    </ligand>
</feature>
<feature type="binding site" evidence="1">
    <location>
        <position position="204"/>
    </location>
    <ligand>
        <name>Zn(2+)</name>
        <dbReference type="ChEBI" id="CHEBI:29105"/>
        <label>2</label>
        <note>catalytic</note>
    </ligand>
</feature>
<feature type="binding site" evidence="1">
    <location>
        <position position="243"/>
    </location>
    <ligand>
        <name>Zn(2+)</name>
        <dbReference type="ChEBI" id="CHEBI:29105"/>
        <label>2</label>
        <note>catalytic</note>
    </ligand>
</feature>
<feature type="binding site" evidence="1">
    <location>
        <position position="270"/>
    </location>
    <ligand>
        <name>Zn(2+)</name>
        <dbReference type="ChEBI" id="CHEBI:29105"/>
        <label>1</label>
    </ligand>
</feature>
<feature type="binding site" evidence="1">
    <location>
        <position position="352"/>
    </location>
    <ligand>
        <name>Zn(2+)</name>
        <dbReference type="ChEBI" id="CHEBI:29105"/>
        <label>2</label>
        <note>catalytic</note>
    </ligand>
</feature>
<feature type="glycosylation site" description="N-linked (GlcNAc...) asparagine" evidence="2">
    <location>
        <position position="177"/>
    </location>
</feature>
<feature type="glycosylation site" description="N-linked (GlcNAc...) asparagine" evidence="2">
    <location>
        <position position="229"/>
    </location>
</feature>
<feature type="disulfide bond" evidence="1">
    <location>
        <begin position="319"/>
        <end position="323"/>
    </location>
</feature>
<sequence>MKFPSFLSLGIAASTTALAALPDQKPIGDTIADVHLGKFLIELAPGDTRWVTEEEKWGLKRDGRKFFDITAEVEQNLFPRAFAKTAVTFPTGLHRTVEVMPLAAQLSKDNMFSHLTTFTSFHTRYYKSETGIQSATWLMKQIQKTISSSPASNARVEKFEHPWGQFSVIATVPGQSNKTVVIGAHQDSINMFLPSILAAPGADDDGSGTVTILEAFRVLLQSEAIAQGNATNTVEFHWYSAEEGGLLGSQAVFSKYKQDNKDIRAMLQQDMTGYSKGTLDAGELESVGVITDFVDEGLTEFIKKVVNGYCDIPFVLTECGYACSDHASASRFGYPSAFVIESKFEHSSQHIHTGQDTIETLDFNHMLQHAKMTLGLAYELAFADI</sequence>
<dbReference type="EC" id="3.4.11.-"/>
<dbReference type="EMBL" id="EQ999980">
    <property type="protein sequence ID" value="EEQ92241.1"/>
    <property type="molecule type" value="Genomic_DNA"/>
</dbReference>
<dbReference type="SMR" id="C5GRP9"/>
<dbReference type="STRING" id="559297.C5GRP9"/>
<dbReference type="MEROPS" id="M28.022"/>
<dbReference type="GlyCosmos" id="C5GRP9">
    <property type="glycosylation" value="2 sites, No reported glycans"/>
</dbReference>
<dbReference type="VEuPathDB" id="FungiDB:BDCG_07361"/>
<dbReference type="eggNOG" id="KOG2195">
    <property type="taxonomic scope" value="Eukaryota"/>
</dbReference>
<dbReference type="HOGENOM" id="CLU_025866_0_0_1"/>
<dbReference type="OMA" id="GMLQQDM"/>
<dbReference type="GO" id="GO:0005576">
    <property type="term" value="C:extracellular region"/>
    <property type="evidence" value="ECO:0007669"/>
    <property type="project" value="UniProtKB-SubCell"/>
</dbReference>
<dbReference type="GO" id="GO:0004177">
    <property type="term" value="F:aminopeptidase activity"/>
    <property type="evidence" value="ECO:0007669"/>
    <property type="project" value="UniProtKB-KW"/>
</dbReference>
<dbReference type="GO" id="GO:0046872">
    <property type="term" value="F:metal ion binding"/>
    <property type="evidence" value="ECO:0007669"/>
    <property type="project" value="UniProtKB-KW"/>
</dbReference>
<dbReference type="GO" id="GO:0008235">
    <property type="term" value="F:metalloexopeptidase activity"/>
    <property type="evidence" value="ECO:0007669"/>
    <property type="project" value="InterPro"/>
</dbReference>
<dbReference type="GO" id="GO:0006508">
    <property type="term" value="P:proteolysis"/>
    <property type="evidence" value="ECO:0007669"/>
    <property type="project" value="UniProtKB-KW"/>
</dbReference>
<dbReference type="CDD" id="cd03879">
    <property type="entry name" value="M28_AAP"/>
    <property type="match status" value="1"/>
</dbReference>
<dbReference type="FunFam" id="3.40.630.10:FF:000042">
    <property type="entry name" value="Peptide hydrolase"/>
    <property type="match status" value="1"/>
</dbReference>
<dbReference type="Gene3D" id="3.40.630.10">
    <property type="entry name" value="Zn peptidases"/>
    <property type="match status" value="1"/>
</dbReference>
<dbReference type="InterPro" id="IPR045175">
    <property type="entry name" value="M28_fam"/>
</dbReference>
<dbReference type="InterPro" id="IPR007484">
    <property type="entry name" value="Peptidase_M28"/>
</dbReference>
<dbReference type="PANTHER" id="PTHR12147:SF56">
    <property type="entry name" value="AMINOPEPTIDASE YDR415C-RELATED"/>
    <property type="match status" value="1"/>
</dbReference>
<dbReference type="PANTHER" id="PTHR12147">
    <property type="entry name" value="METALLOPEPTIDASE M28 FAMILY MEMBER"/>
    <property type="match status" value="1"/>
</dbReference>
<dbReference type="Pfam" id="PF04389">
    <property type="entry name" value="Peptidase_M28"/>
    <property type="match status" value="1"/>
</dbReference>
<dbReference type="SUPFAM" id="SSF53187">
    <property type="entry name" value="Zn-dependent exopeptidases"/>
    <property type="match status" value="1"/>
</dbReference>
<evidence type="ECO:0000250" key="1"/>
<evidence type="ECO:0000255" key="2"/>
<evidence type="ECO:0000305" key="3"/>
<accession>C5GRP9</accession>
<gene>
    <name type="primary">LAP1</name>
    <name type="ORF">BDCG_07361</name>
</gene>
<organism>
    <name type="scientific">Ajellomyces dermatitidis (strain ER-3 / ATCC MYA-2586)</name>
    <name type="common">Blastomyces dermatitidis</name>
    <dbReference type="NCBI Taxonomy" id="559297"/>
    <lineage>
        <taxon>Eukaryota</taxon>
        <taxon>Fungi</taxon>
        <taxon>Dikarya</taxon>
        <taxon>Ascomycota</taxon>
        <taxon>Pezizomycotina</taxon>
        <taxon>Eurotiomycetes</taxon>
        <taxon>Eurotiomycetidae</taxon>
        <taxon>Onygenales</taxon>
        <taxon>Ajellomycetaceae</taxon>
        <taxon>Blastomyces</taxon>
    </lineage>
</organism>
<protein>
    <recommendedName>
        <fullName>Leucine aminopeptidase 1</fullName>
        <ecNumber>3.4.11.-</ecNumber>
    </recommendedName>
    <alternativeName>
        <fullName>Leucyl aminopeptidase 1</fullName>
        <shortName>LAP1</shortName>
    </alternativeName>
</protein>
<proteinExistence type="inferred from homology"/>
<name>LAP1_AJEDR</name>
<comment type="function">
    <text evidence="1">Extracellular aminopeptidase that allows assimilation of proteinaceous substrates.</text>
</comment>
<comment type="cofactor">
    <cofactor evidence="1">
        <name>Zn(2+)</name>
        <dbReference type="ChEBI" id="CHEBI:29105"/>
    </cofactor>
    <text evidence="1">Binds 2 Zn(2+) ions per subunit.</text>
</comment>
<comment type="subunit">
    <text evidence="1">Monomer.</text>
</comment>
<comment type="subcellular location">
    <subcellularLocation>
        <location evidence="1">Secreted</location>
    </subcellularLocation>
</comment>
<comment type="similarity">
    <text evidence="3">Belongs to the peptidase M28 family. M28E subfamily.</text>
</comment>